<reference key="1">
    <citation type="submission" date="2006-12" db="EMBL/GenBank/DDBJ databases">
        <title>Complete sequence of Shewanella sp. W3-18-1.</title>
        <authorList>
            <consortium name="US DOE Joint Genome Institute"/>
            <person name="Copeland A."/>
            <person name="Lucas S."/>
            <person name="Lapidus A."/>
            <person name="Barry K."/>
            <person name="Detter J.C."/>
            <person name="Glavina del Rio T."/>
            <person name="Hammon N."/>
            <person name="Israni S."/>
            <person name="Dalin E."/>
            <person name="Tice H."/>
            <person name="Pitluck S."/>
            <person name="Chain P."/>
            <person name="Malfatti S."/>
            <person name="Shin M."/>
            <person name="Vergez L."/>
            <person name="Schmutz J."/>
            <person name="Larimer F."/>
            <person name="Land M."/>
            <person name="Hauser L."/>
            <person name="Kyrpides N."/>
            <person name="Lykidis A."/>
            <person name="Tiedje J."/>
            <person name="Richardson P."/>
        </authorList>
    </citation>
    <scope>NUCLEOTIDE SEQUENCE [LARGE SCALE GENOMIC DNA]</scope>
    <source>
        <strain>W3-18-1</strain>
    </source>
</reference>
<keyword id="KW-0560">Oxidoreductase</keyword>
<keyword id="KW-0663">Pyridoxal phosphate</keyword>
<name>GCSP_SHESW</name>
<comment type="function">
    <text evidence="1">The glycine cleavage system catalyzes the degradation of glycine. The P protein binds the alpha-amino group of glycine through its pyridoxal phosphate cofactor; CO(2) is released and the remaining methylamine moiety is then transferred to the lipoamide cofactor of the H protein.</text>
</comment>
<comment type="catalytic activity">
    <reaction evidence="1">
        <text>N(6)-[(R)-lipoyl]-L-lysyl-[glycine-cleavage complex H protein] + glycine + H(+) = N(6)-[(R)-S(8)-aminomethyldihydrolipoyl]-L-lysyl-[glycine-cleavage complex H protein] + CO2</text>
        <dbReference type="Rhea" id="RHEA:24304"/>
        <dbReference type="Rhea" id="RHEA-COMP:10494"/>
        <dbReference type="Rhea" id="RHEA-COMP:10495"/>
        <dbReference type="ChEBI" id="CHEBI:15378"/>
        <dbReference type="ChEBI" id="CHEBI:16526"/>
        <dbReference type="ChEBI" id="CHEBI:57305"/>
        <dbReference type="ChEBI" id="CHEBI:83099"/>
        <dbReference type="ChEBI" id="CHEBI:83143"/>
        <dbReference type="EC" id="1.4.4.2"/>
    </reaction>
</comment>
<comment type="cofactor">
    <cofactor evidence="1">
        <name>pyridoxal 5'-phosphate</name>
        <dbReference type="ChEBI" id="CHEBI:597326"/>
    </cofactor>
</comment>
<comment type="subunit">
    <text evidence="1">The glycine cleavage system is composed of four proteins: P, T, L and H.</text>
</comment>
<comment type="similarity">
    <text evidence="1">Belongs to the GcvP family.</text>
</comment>
<accession>A1RFY8</accession>
<gene>
    <name evidence="1" type="primary">gcvP</name>
    <name type="ordered locus">Sputw3181_0732</name>
</gene>
<sequence length="962" mass="104568">MTKQTLTQLEQHDLFLRRHIGPDSSQQQAMLNYVGAESLDDLTAQIVPESIRLSQELSIGDSCGEAEGIAYIRGLAKQNQVFKSYIGMGYYGTQVPNVILRNVLENPGWYTAYTPYQPEIAQGRLEAILNFQQVSMDLTGLDLASASLLDEATAAAEAMALAKRVSKAKKANIFFVADDVFPQTLDVVKTRAECFGFEVVVGPASEAVNHELFGALFQYTNRFGQITDFTELFAELRAKNVIVTVAADIMSLVLLKSPGAMGADVVFGSAQRFGVPMGFGGPHAAFFVARDEHKRSMPGRIIGVSKDARGNRALRMAMQTREQHIRREKANSNICTAQILLANMASFYAVFHGPDGLKTIASRIHRFADILAAGLQAKGVSLVNSTWFDTLSIKGLDVAAVNARALAAEMNLRFDADGTVGVSLDETTLRTDIDALFDVILGAGHGLDVAALDAQIVAQGSQSIPAALVRQDAILSHPTFNRYQSETEMMRYIKRLESKDLALNYSMISLGSCTMKLNAAVEMIPVSWPEFANMHPFCPLDQAKGYTQLIEELSSWLVNVTGYDAVCIQPNSGAQGEYAGLLAIKKYHESRGDAHRNICLIPQSAHGTNPASAQLAGMQVVVTACDKQGNVDLEDLKTKAAEVAENLSCIMITYPSTHGVYEESIREICDIVHQHGGQVYLDGANMNAQVGLTSPGFIGADVSHLNLHKTFAIPHGGGGPGMGPIGVKSHLAPFVAGHVVVKPGRVSDNNGAVSAAPYGSAGILPISWMYIKLLGSNGLKKSTQTALLNANYVMKKLSEHYPVLFRGRNDRVAHECIIDLRPLKEASGVTEMDIAKRLNDYGFHAPTMSFPVAGTLMIEPTESESKVELDRFIDAMVSIRAEIAKVESGEWPADNNPLHNAPHTMADIMDPEFDTRPYSREVAVFPSAAVRTNKFWPTVNRIDDVYGDRNLMCSCAPLSDYE</sequence>
<dbReference type="EC" id="1.4.4.2" evidence="1"/>
<dbReference type="EMBL" id="CP000503">
    <property type="protein sequence ID" value="ABM23583.1"/>
    <property type="molecule type" value="Genomic_DNA"/>
</dbReference>
<dbReference type="RefSeq" id="WP_011788113.1">
    <property type="nucleotide sequence ID" value="NC_008750.1"/>
</dbReference>
<dbReference type="SMR" id="A1RFY8"/>
<dbReference type="KEGG" id="shw:Sputw3181_0732"/>
<dbReference type="HOGENOM" id="CLU_004620_1_1_6"/>
<dbReference type="Proteomes" id="UP000002597">
    <property type="component" value="Chromosome"/>
</dbReference>
<dbReference type="GO" id="GO:0005829">
    <property type="term" value="C:cytosol"/>
    <property type="evidence" value="ECO:0007669"/>
    <property type="project" value="TreeGrafter"/>
</dbReference>
<dbReference type="GO" id="GO:0005960">
    <property type="term" value="C:glycine cleavage complex"/>
    <property type="evidence" value="ECO:0007669"/>
    <property type="project" value="TreeGrafter"/>
</dbReference>
<dbReference type="GO" id="GO:0016594">
    <property type="term" value="F:glycine binding"/>
    <property type="evidence" value="ECO:0007669"/>
    <property type="project" value="TreeGrafter"/>
</dbReference>
<dbReference type="GO" id="GO:0004375">
    <property type="term" value="F:glycine dehydrogenase (decarboxylating) activity"/>
    <property type="evidence" value="ECO:0007669"/>
    <property type="project" value="UniProtKB-EC"/>
</dbReference>
<dbReference type="GO" id="GO:0030170">
    <property type="term" value="F:pyridoxal phosphate binding"/>
    <property type="evidence" value="ECO:0007669"/>
    <property type="project" value="TreeGrafter"/>
</dbReference>
<dbReference type="GO" id="GO:0019464">
    <property type="term" value="P:glycine decarboxylation via glycine cleavage system"/>
    <property type="evidence" value="ECO:0007669"/>
    <property type="project" value="UniProtKB-UniRule"/>
</dbReference>
<dbReference type="CDD" id="cd00613">
    <property type="entry name" value="GDC-P"/>
    <property type="match status" value="2"/>
</dbReference>
<dbReference type="FunFam" id="3.40.640.10:FF:000005">
    <property type="entry name" value="Glycine dehydrogenase (decarboxylating), mitochondrial"/>
    <property type="match status" value="1"/>
</dbReference>
<dbReference type="FunFam" id="3.90.1150.10:FF:000007">
    <property type="entry name" value="Glycine dehydrogenase (decarboxylating), mitochondrial"/>
    <property type="match status" value="1"/>
</dbReference>
<dbReference type="FunFam" id="3.40.640.10:FF:000007">
    <property type="entry name" value="glycine dehydrogenase (Decarboxylating), mitochondrial"/>
    <property type="match status" value="1"/>
</dbReference>
<dbReference type="Gene3D" id="3.90.1150.10">
    <property type="entry name" value="Aspartate Aminotransferase, domain 1"/>
    <property type="match status" value="2"/>
</dbReference>
<dbReference type="Gene3D" id="3.40.640.10">
    <property type="entry name" value="Type I PLP-dependent aspartate aminotransferase-like (Major domain)"/>
    <property type="match status" value="2"/>
</dbReference>
<dbReference type="HAMAP" id="MF_00711">
    <property type="entry name" value="GcvP"/>
    <property type="match status" value="1"/>
</dbReference>
<dbReference type="InterPro" id="IPR003437">
    <property type="entry name" value="GcvP"/>
</dbReference>
<dbReference type="InterPro" id="IPR049316">
    <property type="entry name" value="GDC-P_C"/>
</dbReference>
<dbReference type="InterPro" id="IPR049315">
    <property type="entry name" value="GDC-P_N"/>
</dbReference>
<dbReference type="InterPro" id="IPR020581">
    <property type="entry name" value="GDC_P"/>
</dbReference>
<dbReference type="InterPro" id="IPR015424">
    <property type="entry name" value="PyrdxlP-dep_Trfase"/>
</dbReference>
<dbReference type="InterPro" id="IPR015421">
    <property type="entry name" value="PyrdxlP-dep_Trfase_major"/>
</dbReference>
<dbReference type="InterPro" id="IPR015422">
    <property type="entry name" value="PyrdxlP-dep_Trfase_small"/>
</dbReference>
<dbReference type="NCBIfam" id="TIGR00461">
    <property type="entry name" value="gcvP"/>
    <property type="match status" value="1"/>
</dbReference>
<dbReference type="NCBIfam" id="NF003346">
    <property type="entry name" value="PRK04366.1"/>
    <property type="match status" value="1"/>
</dbReference>
<dbReference type="PANTHER" id="PTHR11773:SF13">
    <property type="entry name" value="GLYCINE DEHYDROGENASE (DECARBOXYLATING)"/>
    <property type="match status" value="1"/>
</dbReference>
<dbReference type="PANTHER" id="PTHR11773">
    <property type="entry name" value="GLYCINE DEHYDROGENASE, DECARBOXYLATING"/>
    <property type="match status" value="1"/>
</dbReference>
<dbReference type="Pfam" id="PF21478">
    <property type="entry name" value="GcvP2_C"/>
    <property type="match status" value="1"/>
</dbReference>
<dbReference type="Pfam" id="PF02347">
    <property type="entry name" value="GDC-P"/>
    <property type="match status" value="2"/>
</dbReference>
<dbReference type="SUPFAM" id="SSF53383">
    <property type="entry name" value="PLP-dependent transferases"/>
    <property type="match status" value="2"/>
</dbReference>
<protein>
    <recommendedName>
        <fullName evidence="1">Glycine dehydrogenase (decarboxylating)</fullName>
        <ecNumber evidence="1">1.4.4.2</ecNumber>
    </recommendedName>
    <alternativeName>
        <fullName evidence="1">Glycine cleavage system P-protein</fullName>
    </alternativeName>
    <alternativeName>
        <fullName evidence="1">Glycine decarboxylase</fullName>
    </alternativeName>
    <alternativeName>
        <fullName evidence="1">Glycine dehydrogenase (aminomethyl-transferring)</fullName>
    </alternativeName>
</protein>
<organism>
    <name type="scientific">Shewanella sp. (strain W3-18-1)</name>
    <dbReference type="NCBI Taxonomy" id="351745"/>
    <lineage>
        <taxon>Bacteria</taxon>
        <taxon>Pseudomonadati</taxon>
        <taxon>Pseudomonadota</taxon>
        <taxon>Gammaproteobacteria</taxon>
        <taxon>Alteromonadales</taxon>
        <taxon>Shewanellaceae</taxon>
        <taxon>Shewanella</taxon>
    </lineage>
</organism>
<evidence type="ECO:0000255" key="1">
    <source>
        <dbReference type="HAMAP-Rule" id="MF_00711"/>
    </source>
</evidence>
<proteinExistence type="inferred from homology"/>
<feature type="chain" id="PRO_1000045615" description="Glycine dehydrogenase (decarboxylating)">
    <location>
        <begin position="1"/>
        <end position="962"/>
    </location>
</feature>
<feature type="modified residue" description="N6-(pyridoxal phosphate)lysine" evidence="1">
    <location>
        <position position="709"/>
    </location>
</feature>